<proteinExistence type="inferred from homology"/>
<gene>
    <name evidence="1" type="primary">truD</name>
    <name type="ordered locus">SCH_2860</name>
</gene>
<name>TRUD_SALCH</name>
<keyword id="KW-0413">Isomerase</keyword>
<keyword id="KW-0819">tRNA processing</keyword>
<accession>Q57KJ6</accession>
<feature type="chain" id="PRO_0000230150" description="tRNA pseudouridine synthase D">
    <location>
        <begin position="1"/>
        <end position="349"/>
    </location>
</feature>
<feature type="domain" description="TRUD" evidence="1">
    <location>
        <begin position="155"/>
        <end position="303"/>
    </location>
</feature>
<feature type="active site" description="Nucleophile" evidence="1">
    <location>
        <position position="80"/>
    </location>
</feature>
<feature type="binding site" evidence="1">
    <location>
        <position position="27"/>
    </location>
    <ligand>
        <name>substrate</name>
    </ligand>
</feature>
<feature type="binding site" evidence="1">
    <location>
        <position position="129"/>
    </location>
    <ligand>
        <name>substrate</name>
    </ligand>
</feature>
<feature type="binding site" evidence="1">
    <location>
        <position position="329"/>
    </location>
    <ligand>
        <name>substrate</name>
    </ligand>
</feature>
<dbReference type="EC" id="5.4.99.27" evidence="1"/>
<dbReference type="EMBL" id="AE017220">
    <property type="protein sequence ID" value="AAX66766.1"/>
    <property type="molecule type" value="Genomic_DNA"/>
</dbReference>
<dbReference type="RefSeq" id="WP_011264373.1">
    <property type="nucleotide sequence ID" value="NC_006905.1"/>
</dbReference>
<dbReference type="SMR" id="Q57KJ6"/>
<dbReference type="KEGG" id="sec:SCH_2860"/>
<dbReference type="HOGENOM" id="CLU_005281_4_0_6"/>
<dbReference type="Proteomes" id="UP000000538">
    <property type="component" value="Chromosome"/>
</dbReference>
<dbReference type="GO" id="GO:0005829">
    <property type="term" value="C:cytosol"/>
    <property type="evidence" value="ECO:0007669"/>
    <property type="project" value="TreeGrafter"/>
</dbReference>
<dbReference type="GO" id="GO:0003723">
    <property type="term" value="F:RNA binding"/>
    <property type="evidence" value="ECO:0007669"/>
    <property type="project" value="InterPro"/>
</dbReference>
<dbReference type="GO" id="GO:0160150">
    <property type="term" value="F:tRNA pseudouridine(13) synthase activity"/>
    <property type="evidence" value="ECO:0007669"/>
    <property type="project" value="UniProtKB-EC"/>
</dbReference>
<dbReference type="GO" id="GO:0031119">
    <property type="term" value="P:tRNA pseudouridine synthesis"/>
    <property type="evidence" value="ECO:0007669"/>
    <property type="project" value="UniProtKB-UniRule"/>
</dbReference>
<dbReference type="CDD" id="cd02575">
    <property type="entry name" value="PseudoU_synth_EcTruD"/>
    <property type="match status" value="1"/>
</dbReference>
<dbReference type="FunFam" id="3.30.2340.10:FF:000001">
    <property type="entry name" value="tRNA pseudouridine synthase D"/>
    <property type="match status" value="1"/>
</dbReference>
<dbReference type="FunFam" id="3.30.2350.20:FF:000001">
    <property type="entry name" value="tRNA pseudouridine synthase D"/>
    <property type="match status" value="1"/>
</dbReference>
<dbReference type="Gene3D" id="3.30.2350.20">
    <property type="entry name" value="TruD, catalytic domain"/>
    <property type="match status" value="1"/>
</dbReference>
<dbReference type="Gene3D" id="3.30.2340.10">
    <property type="entry name" value="TruD, insertion domain"/>
    <property type="match status" value="1"/>
</dbReference>
<dbReference type="HAMAP" id="MF_01082">
    <property type="entry name" value="TruD"/>
    <property type="match status" value="1"/>
</dbReference>
<dbReference type="InterPro" id="IPR020103">
    <property type="entry name" value="PsdUridine_synth_cat_dom_sf"/>
</dbReference>
<dbReference type="InterPro" id="IPR001656">
    <property type="entry name" value="PsdUridine_synth_TruD"/>
</dbReference>
<dbReference type="InterPro" id="IPR020119">
    <property type="entry name" value="PsdUridine_synth_TruD_CS"/>
</dbReference>
<dbReference type="InterPro" id="IPR011760">
    <property type="entry name" value="PsdUridine_synth_TruD_insert"/>
</dbReference>
<dbReference type="InterPro" id="IPR042214">
    <property type="entry name" value="TruD_catalytic"/>
</dbReference>
<dbReference type="InterPro" id="IPR043165">
    <property type="entry name" value="TruD_insert_sf"/>
</dbReference>
<dbReference type="InterPro" id="IPR050170">
    <property type="entry name" value="TruD_pseudoU_synthase"/>
</dbReference>
<dbReference type="NCBIfam" id="NF002155">
    <property type="entry name" value="PRK00984.1-4"/>
    <property type="match status" value="1"/>
</dbReference>
<dbReference type="NCBIfam" id="TIGR00094">
    <property type="entry name" value="tRNA_TruD_broad"/>
    <property type="match status" value="1"/>
</dbReference>
<dbReference type="PANTHER" id="PTHR47811">
    <property type="entry name" value="TRNA PSEUDOURIDINE SYNTHASE D"/>
    <property type="match status" value="1"/>
</dbReference>
<dbReference type="PANTHER" id="PTHR47811:SF1">
    <property type="entry name" value="TRNA PSEUDOURIDINE SYNTHASE D"/>
    <property type="match status" value="1"/>
</dbReference>
<dbReference type="Pfam" id="PF01142">
    <property type="entry name" value="TruD"/>
    <property type="match status" value="2"/>
</dbReference>
<dbReference type="SUPFAM" id="SSF55120">
    <property type="entry name" value="Pseudouridine synthase"/>
    <property type="match status" value="1"/>
</dbReference>
<dbReference type="PROSITE" id="PS50984">
    <property type="entry name" value="TRUD"/>
    <property type="match status" value="1"/>
</dbReference>
<dbReference type="PROSITE" id="PS01268">
    <property type="entry name" value="UPF0024"/>
    <property type="match status" value="1"/>
</dbReference>
<reference key="1">
    <citation type="journal article" date="2005" name="Nucleic Acids Res.">
        <title>The genome sequence of Salmonella enterica serovar Choleraesuis, a highly invasive and resistant zoonotic pathogen.</title>
        <authorList>
            <person name="Chiu C.-H."/>
            <person name="Tang P."/>
            <person name="Chu C."/>
            <person name="Hu S."/>
            <person name="Bao Q."/>
            <person name="Yu J."/>
            <person name="Chou Y.-Y."/>
            <person name="Wang H.-S."/>
            <person name="Lee Y.-S."/>
        </authorList>
    </citation>
    <scope>NUCLEOTIDE SEQUENCE [LARGE SCALE GENOMIC DNA]</scope>
    <source>
        <strain>SC-B67</strain>
    </source>
</reference>
<sequence>MTEFDNLTWLHGKPQGSGLLKANPEDFVVVEDLGFTPDGEGEHILLRILKNGCNTRFVADALAKFLKIHAREVSFAGQKDKHAVTEQWLCARVPGKEMPDFSAFQLEGCKVLEYARHKRKLRLGALKGNAFTLVLREISDRRDVETRLQAIRDGGVPNYFGAQRFGIGGSNLQGALRWAQSNAPVRDRNKRSFWLSAARSALFNQIVHQRLKKPDFNQVVDGDALQLAGRGSWFVATSEELPELQRRVDEKELMITASLPGSGEWGTQRAALAFEQDAIAQETVLQSLLLREKVEASRRAMLLYPQQLSWNWWDDVTVELRFWLPAGSFATSVVRGLINTMGDYAHIAE</sequence>
<evidence type="ECO:0000255" key="1">
    <source>
        <dbReference type="HAMAP-Rule" id="MF_01082"/>
    </source>
</evidence>
<comment type="function">
    <text evidence="1">Responsible for synthesis of pseudouridine from uracil-13 in transfer RNAs.</text>
</comment>
<comment type="catalytic activity">
    <reaction evidence="1">
        <text>uridine(13) in tRNA = pseudouridine(13) in tRNA</text>
        <dbReference type="Rhea" id="RHEA:42540"/>
        <dbReference type="Rhea" id="RHEA-COMP:10105"/>
        <dbReference type="Rhea" id="RHEA-COMP:10106"/>
        <dbReference type="ChEBI" id="CHEBI:65314"/>
        <dbReference type="ChEBI" id="CHEBI:65315"/>
        <dbReference type="EC" id="5.4.99.27"/>
    </reaction>
</comment>
<comment type="similarity">
    <text evidence="1">Belongs to the pseudouridine synthase TruD family.</text>
</comment>
<protein>
    <recommendedName>
        <fullName evidence="1">tRNA pseudouridine synthase D</fullName>
        <ecNumber evidence="1">5.4.99.27</ecNumber>
    </recommendedName>
    <alternativeName>
        <fullName evidence="1">tRNA pseudouridine(13) synthase</fullName>
    </alternativeName>
    <alternativeName>
        <fullName evidence="1">tRNA pseudouridylate synthase D</fullName>
    </alternativeName>
    <alternativeName>
        <fullName evidence="1">tRNA-uridine isomerase D</fullName>
    </alternativeName>
</protein>
<organism>
    <name type="scientific">Salmonella choleraesuis (strain SC-B67)</name>
    <dbReference type="NCBI Taxonomy" id="321314"/>
    <lineage>
        <taxon>Bacteria</taxon>
        <taxon>Pseudomonadati</taxon>
        <taxon>Pseudomonadota</taxon>
        <taxon>Gammaproteobacteria</taxon>
        <taxon>Enterobacterales</taxon>
        <taxon>Enterobacteriaceae</taxon>
        <taxon>Salmonella</taxon>
    </lineage>
</organism>